<gene>
    <name evidence="1" type="primary">adk</name>
    <name type="ordered locus">BamMC406_2466</name>
</gene>
<sequence>MRLILLGAPGAGKGTQANFIKEKFGIPQISTGDMLRAAVKAGSPLGVEAKGYMDAGKLVPDALIIGLVKERLKDADCANGYLFDGFPRTIAQADAMKDAGVAIDYVLEIDVPFSEIVERMSGRRTHPASGRTYHVKFNPPKVEGKDDVTGEPLIQRDDDKEETVKKRLEVYEAQTKPLITYYGDWAKRGEENGLKAPQYRKISGLGTVDEIRERAFDALK</sequence>
<comment type="function">
    <text evidence="1">Catalyzes the reversible transfer of the terminal phosphate group between ATP and AMP. Plays an important role in cellular energy homeostasis and in adenine nucleotide metabolism.</text>
</comment>
<comment type="catalytic activity">
    <reaction evidence="1">
        <text>AMP + ATP = 2 ADP</text>
        <dbReference type="Rhea" id="RHEA:12973"/>
        <dbReference type="ChEBI" id="CHEBI:30616"/>
        <dbReference type="ChEBI" id="CHEBI:456215"/>
        <dbReference type="ChEBI" id="CHEBI:456216"/>
        <dbReference type="EC" id="2.7.4.3"/>
    </reaction>
</comment>
<comment type="pathway">
    <text evidence="1">Purine metabolism; AMP biosynthesis via salvage pathway; AMP from ADP: step 1/1.</text>
</comment>
<comment type="subunit">
    <text evidence="1">Monomer.</text>
</comment>
<comment type="subcellular location">
    <subcellularLocation>
        <location evidence="1">Cytoplasm</location>
    </subcellularLocation>
</comment>
<comment type="domain">
    <text evidence="1">Consists of three domains, a large central CORE domain and two small peripheral domains, NMPbind and LID, which undergo movements during catalysis. The LID domain closes over the site of phosphoryl transfer upon ATP binding. Assembling and dissambling the active center during each catalytic cycle provides an effective means to prevent ATP hydrolysis.</text>
</comment>
<comment type="similarity">
    <text evidence="1">Belongs to the adenylate kinase family.</text>
</comment>
<accession>B1YVE0</accession>
<reference key="1">
    <citation type="submission" date="2008-04" db="EMBL/GenBank/DDBJ databases">
        <title>Complete sequence of chromosome 1 of Burkholderia ambifaria MC40-6.</title>
        <authorList>
            <person name="Copeland A."/>
            <person name="Lucas S."/>
            <person name="Lapidus A."/>
            <person name="Glavina del Rio T."/>
            <person name="Dalin E."/>
            <person name="Tice H."/>
            <person name="Pitluck S."/>
            <person name="Chain P."/>
            <person name="Malfatti S."/>
            <person name="Shin M."/>
            <person name="Vergez L."/>
            <person name="Lang D."/>
            <person name="Schmutz J."/>
            <person name="Larimer F."/>
            <person name="Land M."/>
            <person name="Hauser L."/>
            <person name="Kyrpides N."/>
            <person name="Lykidis A."/>
            <person name="Ramette A."/>
            <person name="Konstantinidis K."/>
            <person name="Tiedje J."/>
            <person name="Richardson P."/>
        </authorList>
    </citation>
    <scope>NUCLEOTIDE SEQUENCE [LARGE SCALE GENOMIC DNA]</scope>
    <source>
        <strain>MC40-6</strain>
    </source>
</reference>
<proteinExistence type="inferred from homology"/>
<evidence type="ECO:0000255" key="1">
    <source>
        <dbReference type="HAMAP-Rule" id="MF_00235"/>
    </source>
</evidence>
<evidence type="ECO:0000256" key="2">
    <source>
        <dbReference type="SAM" id="MobiDB-lite"/>
    </source>
</evidence>
<protein>
    <recommendedName>
        <fullName evidence="1">Adenylate kinase</fullName>
        <shortName evidence="1">AK</shortName>
        <ecNumber evidence="1">2.7.4.3</ecNumber>
    </recommendedName>
    <alternativeName>
        <fullName evidence="1">ATP-AMP transphosphorylase</fullName>
    </alternativeName>
    <alternativeName>
        <fullName evidence="1">ATP:AMP phosphotransferase</fullName>
    </alternativeName>
    <alternativeName>
        <fullName evidence="1">Adenylate monophosphate kinase</fullName>
    </alternativeName>
</protein>
<dbReference type="EC" id="2.7.4.3" evidence="1"/>
<dbReference type="EMBL" id="CP001025">
    <property type="protein sequence ID" value="ACB64944.1"/>
    <property type="molecule type" value="Genomic_DNA"/>
</dbReference>
<dbReference type="RefSeq" id="WP_012364543.1">
    <property type="nucleotide sequence ID" value="NC_010551.1"/>
</dbReference>
<dbReference type="SMR" id="B1YVE0"/>
<dbReference type="KEGG" id="bac:BamMC406_2466"/>
<dbReference type="HOGENOM" id="CLU_032354_1_2_4"/>
<dbReference type="OrthoDB" id="9805030at2"/>
<dbReference type="UniPathway" id="UPA00588">
    <property type="reaction ID" value="UER00649"/>
</dbReference>
<dbReference type="Proteomes" id="UP000001680">
    <property type="component" value="Chromosome 1"/>
</dbReference>
<dbReference type="GO" id="GO:0005737">
    <property type="term" value="C:cytoplasm"/>
    <property type="evidence" value="ECO:0007669"/>
    <property type="project" value="UniProtKB-SubCell"/>
</dbReference>
<dbReference type="GO" id="GO:0004017">
    <property type="term" value="F:adenylate kinase activity"/>
    <property type="evidence" value="ECO:0007669"/>
    <property type="project" value="UniProtKB-UniRule"/>
</dbReference>
<dbReference type="GO" id="GO:0005524">
    <property type="term" value="F:ATP binding"/>
    <property type="evidence" value="ECO:0007669"/>
    <property type="project" value="UniProtKB-UniRule"/>
</dbReference>
<dbReference type="GO" id="GO:0044209">
    <property type="term" value="P:AMP salvage"/>
    <property type="evidence" value="ECO:0007669"/>
    <property type="project" value="UniProtKB-UniRule"/>
</dbReference>
<dbReference type="CDD" id="cd01428">
    <property type="entry name" value="ADK"/>
    <property type="match status" value="1"/>
</dbReference>
<dbReference type="FunFam" id="3.40.50.300:FF:000106">
    <property type="entry name" value="Adenylate kinase mitochondrial"/>
    <property type="match status" value="1"/>
</dbReference>
<dbReference type="Gene3D" id="3.40.50.300">
    <property type="entry name" value="P-loop containing nucleotide triphosphate hydrolases"/>
    <property type="match status" value="1"/>
</dbReference>
<dbReference type="HAMAP" id="MF_00235">
    <property type="entry name" value="Adenylate_kinase_Adk"/>
    <property type="match status" value="1"/>
</dbReference>
<dbReference type="InterPro" id="IPR006259">
    <property type="entry name" value="Adenyl_kin_sub"/>
</dbReference>
<dbReference type="InterPro" id="IPR000850">
    <property type="entry name" value="Adenylat/UMP-CMP_kin"/>
</dbReference>
<dbReference type="InterPro" id="IPR033690">
    <property type="entry name" value="Adenylat_kinase_CS"/>
</dbReference>
<dbReference type="InterPro" id="IPR007862">
    <property type="entry name" value="Adenylate_kinase_lid-dom"/>
</dbReference>
<dbReference type="InterPro" id="IPR027417">
    <property type="entry name" value="P-loop_NTPase"/>
</dbReference>
<dbReference type="NCBIfam" id="TIGR01351">
    <property type="entry name" value="adk"/>
    <property type="match status" value="1"/>
</dbReference>
<dbReference type="NCBIfam" id="NF001379">
    <property type="entry name" value="PRK00279.1-1"/>
    <property type="match status" value="1"/>
</dbReference>
<dbReference type="NCBIfam" id="NF001380">
    <property type="entry name" value="PRK00279.1-2"/>
    <property type="match status" value="1"/>
</dbReference>
<dbReference type="NCBIfam" id="NF001381">
    <property type="entry name" value="PRK00279.1-3"/>
    <property type="match status" value="1"/>
</dbReference>
<dbReference type="NCBIfam" id="NF011100">
    <property type="entry name" value="PRK14527.1"/>
    <property type="match status" value="1"/>
</dbReference>
<dbReference type="PANTHER" id="PTHR23359">
    <property type="entry name" value="NUCLEOTIDE KINASE"/>
    <property type="match status" value="1"/>
</dbReference>
<dbReference type="Pfam" id="PF00406">
    <property type="entry name" value="ADK"/>
    <property type="match status" value="1"/>
</dbReference>
<dbReference type="Pfam" id="PF05191">
    <property type="entry name" value="ADK_lid"/>
    <property type="match status" value="1"/>
</dbReference>
<dbReference type="PRINTS" id="PR00094">
    <property type="entry name" value="ADENYLTKNASE"/>
</dbReference>
<dbReference type="SUPFAM" id="SSF52540">
    <property type="entry name" value="P-loop containing nucleoside triphosphate hydrolases"/>
    <property type="match status" value="1"/>
</dbReference>
<dbReference type="PROSITE" id="PS00113">
    <property type="entry name" value="ADENYLATE_KINASE"/>
    <property type="match status" value="1"/>
</dbReference>
<feature type="chain" id="PRO_1000100535" description="Adenylate kinase">
    <location>
        <begin position="1"/>
        <end position="220"/>
    </location>
</feature>
<feature type="region of interest" description="NMP" evidence="1">
    <location>
        <begin position="30"/>
        <end position="59"/>
    </location>
</feature>
<feature type="region of interest" description="LID" evidence="1">
    <location>
        <begin position="122"/>
        <end position="159"/>
    </location>
</feature>
<feature type="region of interest" description="Disordered" evidence="2">
    <location>
        <begin position="122"/>
        <end position="150"/>
    </location>
</feature>
<feature type="binding site" evidence="1">
    <location>
        <begin position="10"/>
        <end position="15"/>
    </location>
    <ligand>
        <name>ATP</name>
        <dbReference type="ChEBI" id="CHEBI:30616"/>
    </ligand>
</feature>
<feature type="binding site" evidence="1">
    <location>
        <position position="31"/>
    </location>
    <ligand>
        <name>AMP</name>
        <dbReference type="ChEBI" id="CHEBI:456215"/>
    </ligand>
</feature>
<feature type="binding site" evidence="1">
    <location>
        <position position="36"/>
    </location>
    <ligand>
        <name>AMP</name>
        <dbReference type="ChEBI" id="CHEBI:456215"/>
    </ligand>
</feature>
<feature type="binding site" evidence="1">
    <location>
        <begin position="57"/>
        <end position="59"/>
    </location>
    <ligand>
        <name>AMP</name>
        <dbReference type="ChEBI" id="CHEBI:456215"/>
    </ligand>
</feature>
<feature type="binding site" evidence="1">
    <location>
        <begin position="85"/>
        <end position="88"/>
    </location>
    <ligand>
        <name>AMP</name>
        <dbReference type="ChEBI" id="CHEBI:456215"/>
    </ligand>
</feature>
<feature type="binding site" evidence="1">
    <location>
        <position position="92"/>
    </location>
    <ligand>
        <name>AMP</name>
        <dbReference type="ChEBI" id="CHEBI:456215"/>
    </ligand>
</feature>
<feature type="binding site" evidence="1">
    <location>
        <position position="123"/>
    </location>
    <ligand>
        <name>ATP</name>
        <dbReference type="ChEBI" id="CHEBI:30616"/>
    </ligand>
</feature>
<feature type="binding site" evidence="1">
    <location>
        <begin position="132"/>
        <end position="133"/>
    </location>
    <ligand>
        <name>ATP</name>
        <dbReference type="ChEBI" id="CHEBI:30616"/>
    </ligand>
</feature>
<feature type="binding site" evidence="1">
    <location>
        <position position="156"/>
    </location>
    <ligand>
        <name>AMP</name>
        <dbReference type="ChEBI" id="CHEBI:456215"/>
    </ligand>
</feature>
<feature type="binding site" evidence="1">
    <location>
        <position position="167"/>
    </location>
    <ligand>
        <name>AMP</name>
        <dbReference type="ChEBI" id="CHEBI:456215"/>
    </ligand>
</feature>
<feature type="binding site" evidence="1">
    <location>
        <position position="206"/>
    </location>
    <ligand>
        <name>ATP</name>
        <dbReference type="ChEBI" id="CHEBI:30616"/>
    </ligand>
</feature>
<organism>
    <name type="scientific">Burkholderia ambifaria (strain MC40-6)</name>
    <dbReference type="NCBI Taxonomy" id="398577"/>
    <lineage>
        <taxon>Bacteria</taxon>
        <taxon>Pseudomonadati</taxon>
        <taxon>Pseudomonadota</taxon>
        <taxon>Betaproteobacteria</taxon>
        <taxon>Burkholderiales</taxon>
        <taxon>Burkholderiaceae</taxon>
        <taxon>Burkholderia</taxon>
        <taxon>Burkholderia cepacia complex</taxon>
    </lineage>
</organism>
<name>KAD_BURA4</name>
<keyword id="KW-0067">ATP-binding</keyword>
<keyword id="KW-0963">Cytoplasm</keyword>
<keyword id="KW-0418">Kinase</keyword>
<keyword id="KW-0545">Nucleotide biosynthesis</keyword>
<keyword id="KW-0547">Nucleotide-binding</keyword>
<keyword id="KW-0808">Transferase</keyword>